<gene>
    <name type="ORF">OsI_20198</name>
</gene>
<name>CSPLS_ORYSI</name>
<evidence type="ECO:0000250" key="1"/>
<evidence type="ECO:0000255" key="2"/>
<evidence type="ECO:0000305" key="3"/>
<dbReference type="EMBL" id="CM000130">
    <property type="protein sequence ID" value="EEC79339.1"/>
    <property type="molecule type" value="Genomic_DNA"/>
</dbReference>
<dbReference type="STRING" id="39946.B8AYU8"/>
<dbReference type="EnsemblPlants" id="BGIOSGA019975-TA">
    <property type="protein sequence ID" value="BGIOSGA019975-PA"/>
    <property type="gene ID" value="BGIOSGA019975"/>
</dbReference>
<dbReference type="EnsemblPlants" id="OsGoSa_05g0019440.01">
    <property type="protein sequence ID" value="OsGoSa_05g0019440.01"/>
    <property type="gene ID" value="OsGoSa_05g0019440"/>
</dbReference>
<dbReference type="EnsemblPlants" id="OsIR64_05g0019150.01">
    <property type="protein sequence ID" value="OsIR64_05g0019150.01"/>
    <property type="gene ID" value="OsIR64_05g0019150"/>
</dbReference>
<dbReference type="EnsemblPlants" id="OsKYG_05g0019370.01">
    <property type="protein sequence ID" value="OsKYG_05g0019370.01"/>
    <property type="gene ID" value="OsKYG_05g0019370"/>
</dbReference>
<dbReference type="EnsemblPlants" id="OsLima_05g0019400.01">
    <property type="protein sequence ID" value="OsLima_05g0019400.01"/>
    <property type="gene ID" value="OsLima_05g0019400"/>
</dbReference>
<dbReference type="EnsemblPlants" id="OsLiXu_05g0019540.01">
    <property type="protein sequence ID" value="OsLiXu_05g0019540.01"/>
    <property type="gene ID" value="OsLiXu_05g0019540"/>
</dbReference>
<dbReference type="EnsemblPlants" id="OsMH63_05G019540_01">
    <property type="protein sequence ID" value="OsMH63_05G019540_01"/>
    <property type="gene ID" value="OsMH63_05G019540"/>
</dbReference>
<dbReference type="EnsemblPlants" id="OsPr106_05g0019570.01">
    <property type="protein sequence ID" value="OsPr106_05g0019570.01"/>
    <property type="gene ID" value="OsPr106_05g0019570"/>
</dbReference>
<dbReference type="EnsemblPlants" id="OsZS97_05G019760_01">
    <property type="protein sequence ID" value="OsZS97_05G019760_01"/>
    <property type="gene ID" value="OsZS97_05G019760"/>
</dbReference>
<dbReference type="Gramene" id="BGIOSGA019975-TA">
    <property type="protein sequence ID" value="BGIOSGA019975-PA"/>
    <property type="gene ID" value="BGIOSGA019975"/>
</dbReference>
<dbReference type="Gramene" id="OsGoSa_05g0019440.01">
    <property type="protein sequence ID" value="OsGoSa_05g0019440.01"/>
    <property type="gene ID" value="OsGoSa_05g0019440"/>
</dbReference>
<dbReference type="Gramene" id="OsIR64_05g0019150.01">
    <property type="protein sequence ID" value="OsIR64_05g0019150.01"/>
    <property type="gene ID" value="OsIR64_05g0019150"/>
</dbReference>
<dbReference type="Gramene" id="OsKYG_05g0019370.01">
    <property type="protein sequence ID" value="OsKYG_05g0019370.01"/>
    <property type="gene ID" value="OsKYG_05g0019370"/>
</dbReference>
<dbReference type="Gramene" id="OsLima_05g0019400.01">
    <property type="protein sequence ID" value="OsLima_05g0019400.01"/>
    <property type="gene ID" value="OsLima_05g0019400"/>
</dbReference>
<dbReference type="Gramene" id="OsLiXu_05g0019540.01">
    <property type="protein sequence ID" value="OsLiXu_05g0019540.01"/>
    <property type="gene ID" value="OsLiXu_05g0019540"/>
</dbReference>
<dbReference type="Gramene" id="OsMH63_05G019540_01">
    <property type="protein sequence ID" value="OsMH63_05G019540_01"/>
    <property type="gene ID" value="OsMH63_05G019540"/>
</dbReference>
<dbReference type="Gramene" id="OsPr106_05g0019570.01">
    <property type="protein sequence ID" value="OsPr106_05g0019570.01"/>
    <property type="gene ID" value="OsPr106_05g0019570"/>
</dbReference>
<dbReference type="Gramene" id="OsZS97_05G019760_01">
    <property type="protein sequence ID" value="OsZS97_05G019760_01"/>
    <property type="gene ID" value="OsZS97_05G019760"/>
</dbReference>
<dbReference type="HOGENOM" id="CLU_103961_1_0_1"/>
<dbReference type="OMA" id="CHMFQIS"/>
<dbReference type="OrthoDB" id="754299at2759"/>
<dbReference type="Proteomes" id="UP000007015">
    <property type="component" value="Chromosome 5"/>
</dbReference>
<dbReference type="GO" id="GO:0005886">
    <property type="term" value="C:plasma membrane"/>
    <property type="evidence" value="ECO:0007669"/>
    <property type="project" value="UniProtKB-SubCell"/>
</dbReference>
<dbReference type="InterPro" id="IPR006702">
    <property type="entry name" value="CASP_dom"/>
</dbReference>
<dbReference type="InterPro" id="IPR045009">
    <property type="entry name" value="CASPL-5"/>
</dbReference>
<dbReference type="PANTHER" id="PTHR32021:SF41">
    <property type="entry name" value="CASP-LIKE PROTEIN 5B2"/>
    <property type="match status" value="1"/>
</dbReference>
<dbReference type="PANTHER" id="PTHR32021">
    <property type="entry name" value="CASP-LIKE PROTEIN 5B3"/>
    <property type="match status" value="1"/>
</dbReference>
<dbReference type="Pfam" id="PF04535">
    <property type="entry name" value="CASP_dom"/>
    <property type="match status" value="1"/>
</dbReference>
<keyword id="KW-1003">Cell membrane</keyword>
<keyword id="KW-0325">Glycoprotein</keyword>
<keyword id="KW-0472">Membrane</keyword>
<keyword id="KW-1185">Reference proteome</keyword>
<keyword id="KW-0812">Transmembrane</keyword>
<keyword id="KW-1133">Transmembrane helix</keyword>
<organism>
    <name type="scientific">Oryza sativa subsp. indica</name>
    <name type="common">Rice</name>
    <dbReference type="NCBI Taxonomy" id="39946"/>
    <lineage>
        <taxon>Eukaryota</taxon>
        <taxon>Viridiplantae</taxon>
        <taxon>Streptophyta</taxon>
        <taxon>Embryophyta</taxon>
        <taxon>Tracheophyta</taxon>
        <taxon>Spermatophyta</taxon>
        <taxon>Magnoliopsida</taxon>
        <taxon>Liliopsida</taxon>
        <taxon>Poales</taxon>
        <taxon>Poaceae</taxon>
        <taxon>BOP clade</taxon>
        <taxon>Oryzoideae</taxon>
        <taxon>Oryzeae</taxon>
        <taxon>Oryzinae</taxon>
        <taxon>Oryza</taxon>
        <taxon>Oryza sativa</taxon>
    </lineage>
</organism>
<reference key="1">
    <citation type="journal article" date="2005" name="PLoS Biol.">
        <title>The genomes of Oryza sativa: a history of duplications.</title>
        <authorList>
            <person name="Yu J."/>
            <person name="Wang J."/>
            <person name="Lin W."/>
            <person name="Li S."/>
            <person name="Li H."/>
            <person name="Zhou J."/>
            <person name="Ni P."/>
            <person name="Dong W."/>
            <person name="Hu S."/>
            <person name="Zeng C."/>
            <person name="Zhang J."/>
            <person name="Zhang Y."/>
            <person name="Li R."/>
            <person name="Xu Z."/>
            <person name="Li S."/>
            <person name="Li X."/>
            <person name="Zheng H."/>
            <person name="Cong L."/>
            <person name="Lin L."/>
            <person name="Yin J."/>
            <person name="Geng J."/>
            <person name="Li G."/>
            <person name="Shi J."/>
            <person name="Liu J."/>
            <person name="Lv H."/>
            <person name="Li J."/>
            <person name="Wang J."/>
            <person name="Deng Y."/>
            <person name="Ran L."/>
            <person name="Shi X."/>
            <person name="Wang X."/>
            <person name="Wu Q."/>
            <person name="Li C."/>
            <person name="Ren X."/>
            <person name="Wang J."/>
            <person name="Wang X."/>
            <person name="Li D."/>
            <person name="Liu D."/>
            <person name="Zhang X."/>
            <person name="Ji Z."/>
            <person name="Zhao W."/>
            <person name="Sun Y."/>
            <person name="Zhang Z."/>
            <person name="Bao J."/>
            <person name="Han Y."/>
            <person name="Dong L."/>
            <person name="Ji J."/>
            <person name="Chen P."/>
            <person name="Wu S."/>
            <person name="Liu J."/>
            <person name="Xiao Y."/>
            <person name="Bu D."/>
            <person name="Tan J."/>
            <person name="Yang L."/>
            <person name="Ye C."/>
            <person name="Zhang J."/>
            <person name="Xu J."/>
            <person name="Zhou Y."/>
            <person name="Yu Y."/>
            <person name="Zhang B."/>
            <person name="Zhuang S."/>
            <person name="Wei H."/>
            <person name="Liu B."/>
            <person name="Lei M."/>
            <person name="Yu H."/>
            <person name="Li Y."/>
            <person name="Xu H."/>
            <person name="Wei S."/>
            <person name="He X."/>
            <person name="Fang L."/>
            <person name="Zhang Z."/>
            <person name="Zhang Y."/>
            <person name="Huang X."/>
            <person name="Su Z."/>
            <person name="Tong W."/>
            <person name="Li J."/>
            <person name="Tong Z."/>
            <person name="Li S."/>
            <person name="Ye J."/>
            <person name="Wang L."/>
            <person name="Fang L."/>
            <person name="Lei T."/>
            <person name="Chen C.-S."/>
            <person name="Chen H.-C."/>
            <person name="Xu Z."/>
            <person name="Li H."/>
            <person name="Huang H."/>
            <person name="Zhang F."/>
            <person name="Xu H."/>
            <person name="Li N."/>
            <person name="Zhao C."/>
            <person name="Li S."/>
            <person name="Dong L."/>
            <person name="Huang Y."/>
            <person name="Li L."/>
            <person name="Xi Y."/>
            <person name="Qi Q."/>
            <person name="Li W."/>
            <person name="Zhang B."/>
            <person name="Hu W."/>
            <person name="Zhang Y."/>
            <person name="Tian X."/>
            <person name="Jiao Y."/>
            <person name="Liang X."/>
            <person name="Jin J."/>
            <person name="Gao L."/>
            <person name="Zheng W."/>
            <person name="Hao B."/>
            <person name="Liu S.-M."/>
            <person name="Wang W."/>
            <person name="Yuan L."/>
            <person name="Cao M."/>
            <person name="McDermott J."/>
            <person name="Samudrala R."/>
            <person name="Wang J."/>
            <person name="Wong G.K.-S."/>
            <person name="Yang H."/>
        </authorList>
    </citation>
    <scope>NUCLEOTIDE SEQUENCE [LARGE SCALE GENOMIC DNA]</scope>
    <source>
        <strain>cv. 93-11</strain>
    </source>
</reference>
<reference key="2">
    <citation type="journal article" date="2014" name="Plant Physiol.">
        <title>Functional and evolutionary analysis of the CASPARIAN STRIP MEMBRANE DOMAIN PROTEIN family.</title>
        <authorList>
            <person name="Roppolo D."/>
            <person name="Boeckmann B."/>
            <person name="Pfister A."/>
            <person name="Boutet E."/>
            <person name="Rubio M.C."/>
            <person name="Denervaud-Tendon V."/>
            <person name="Vermeer J.E."/>
            <person name="Gheyselinck J."/>
            <person name="Xenarios I."/>
            <person name="Geldner N."/>
        </authorList>
    </citation>
    <scope>GENE FAMILY</scope>
    <scope>NOMENCLATURE</scope>
</reference>
<proteinExistence type="inferred from homology"/>
<feature type="chain" id="PRO_0000418692" description="CASP-like protein 5B2">
    <location>
        <begin position="1"/>
        <end position="155"/>
    </location>
</feature>
<feature type="topological domain" description="Cytoplasmic" evidence="2">
    <location>
        <begin position="1"/>
        <end position="18"/>
    </location>
</feature>
<feature type="transmembrane region" description="Helical" evidence="2">
    <location>
        <begin position="19"/>
        <end position="39"/>
    </location>
</feature>
<feature type="topological domain" description="Extracellular" evidence="2">
    <location>
        <begin position="40"/>
        <end position="43"/>
    </location>
</feature>
<feature type="transmembrane region" description="Helical" evidence="2">
    <location>
        <begin position="44"/>
        <end position="64"/>
    </location>
</feature>
<feature type="topological domain" description="Cytoplasmic" evidence="2">
    <location>
        <begin position="65"/>
        <end position="77"/>
    </location>
</feature>
<feature type="transmembrane region" description="Helical" evidence="2">
    <location>
        <begin position="78"/>
        <end position="98"/>
    </location>
</feature>
<feature type="topological domain" description="Extracellular" evidence="2">
    <location>
        <begin position="99"/>
        <end position="128"/>
    </location>
</feature>
<feature type="transmembrane region" description="Helical" evidence="2">
    <location>
        <begin position="129"/>
        <end position="149"/>
    </location>
</feature>
<feature type="topological domain" description="Cytoplasmic" evidence="2">
    <location>
        <begin position="150"/>
        <end position="155"/>
    </location>
</feature>
<feature type="glycosylation site" description="N-linked (GlcNAc...) asparagine" evidence="2">
    <location>
        <position position="40"/>
    </location>
</feature>
<comment type="subunit">
    <text evidence="1">Homodimer and heterodimers.</text>
</comment>
<comment type="subcellular location">
    <subcellularLocation>
        <location evidence="1">Cell membrane</location>
        <topology evidence="1">Multi-pass membrane protein</topology>
    </subcellularLocation>
</comment>
<comment type="similarity">
    <text evidence="3">Belongs to the Casparian strip membrane proteins (CASP) family.</text>
</comment>
<accession>B8AYU8</accession>
<sequence length="155" mass="16669">MWEVAWWRPGTWGGLAMRVGQVAFAGASIGVMASGAGFANYTAFCYLIASMGLQSLWSLGLACLDVYALTVKRDLNNALLVSLFVIGDWVTALLSFAASCSAGGVMVLFKRDVLFCRRYPQLPCGRFELAVALAFLSWALSATSAIIMFCLLAAF</sequence>
<protein>
    <recommendedName>
        <fullName>CASP-like protein 5B2</fullName>
        <shortName>OsCASPL5B2</shortName>
    </recommendedName>
</protein>